<name>RIMP_DINSH</name>
<gene>
    <name evidence="1" type="primary">rimP</name>
    <name type="ordered locus">Dshi_3560</name>
</gene>
<reference key="1">
    <citation type="journal article" date="2010" name="ISME J.">
        <title>The complete genome sequence of the algal symbiont Dinoroseobacter shibae: a hitchhiker's guide to life in the sea.</title>
        <authorList>
            <person name="Wagner-Dobler I."/>
            <person name="Ballhausen B."/>
            <person name="Berger M."/>
            <person name="Brinkhoff T."/>
            <person name="Buchholz I."/>
            <person name="Bunk B."/>
            <person name="Cypionka H."/>
            <person name="Daniel R."/>
            <person name="Drepper T."/>
            <person name="Gerdts G."/>
            <person name="Hahnke S."/>
            <person name="Han C."/>
            <person name="Jahn D."/>
            <person name="Kalhoefer D."/>
            <person name="Kiss H."/>
            <person name="Klenk H.P."/>
            <person name="Kyrpides N."/>
            <person name="Liebl W."/>
            <person name="Liesegang H."/>
            <person name="Meincke L."/>
            <person name="Pati A."/>
            <person name="Petersen J."/>
            <person name="Piekarski T."/>
            <person name="Pommerenke C."/>
            <person name="Pradella S."/>
            <person name="Pukall R."/>
            <person name="Rabus R."/>
            <person name="Stackebrandt E."/>
            <person name="Thole S."/>
            <person name="Thompson L."/>
            <person name="Tielen P."/>
            <person name="Tomasch J."/>
            <person name="von Jan M."/>
            <person name="Wanphrut N."/>
            <person name="Wichels A."/>
            <person name="Zech H."/>
            <person name="Simon M."/>
        </authorList>
    </citation>
    <scope>NUCLEOTIDE SEQUENCE [LARGE SCALE GENOMIC DNA]</scope>
    <source>
        <strain>DSM 16493 / NCIMB 14021 / DFL 12</strain>
    </source>
</reference>
<sequence length="196" mass="21624">MSDLIAKTTLDQRIAALVTPVIEDLGYELVRLRVMSGKSPTLQIMAEKPEGGIEVDDCARISTEVSATLDVEDPIEDNYTLEVSSPGIDRPLTRLKDFDTWVGYEAKIETTELIEGRRRFKGALAGTEGDEVLIEIEEGTIGLKFEWLSDAKLVLTDDLIRDVLKGRKDAGQVDEAQFDEIQTIIDGDDEPPANTA</sequence>
<dbReference type="EMBL" id="CP000830">
    <property type="protein sequence ID" value="ABV95293.1"/>
    <property type="molecule type" value="Genomic_DNA"/>
</dbReference>
<dbReference type="RefSeq" id="WP_012180216.1">
    <property type="nucleotide sequence ID" value="NC_009952.1"/>
</dbReference>
<dbReference type="SMR" id="A8LQ53"/>
<dbReference type="STRING" id="398580.Dshi_3560"/>
<dbReference type="KEGG" id="dsh:Dshi_3560"/>
<dbReference type="eggNOG" id="COG0779">
    <property type="taxonomic scope" value="Bacteria"/>
</dbReference>
<dbReference type="HOGENOM" id="CLU_070525_0_1_5"/>
<dbReference type="OrthoDB" id="9805006at2"/>
<dbReference type="Proteomes" id="UP000006833">
    <property type="component" value="Chromosome"/>
</dbReference>
<dbReference type="GO" id="GO:0005829">
    <property type="term" value="C:cytosol"/>
    <property type="evidence" value="ECO:0007669"/>
    <property type="project" value="TreeGrafter"/>
</dbReference>
<dbReference type="GO" id="GO:0000028">
    <property type="term" value="P:ribosomal small subunit assembly"/>
    <property type="evidence" value="ECO:0007669"/>
    <property type="project" value="TreeGrafter"/>
</dbReference>
<dbReference type="GO" id="GO:0006412">
    <property type="term" value="P:translation"/>
    <property type="evidence" value="ECO:0007669"/>
    <property type="project" value="TreeGrafter"/>
</dbReference>
<dbReference type="CDD" id="cd01734">
    <property type="entry name" value="YlxS_C"/>
    <property type="match status" value="1"/>
</dbReference>
<dbReference type="FunFam" id="3.30.300.70:FF:000001">
    <property type="entry name" value="Ribosome maturation factor RimP"/>
    <property type="match status" value="1"/>
</dbReference>
<dbReference type="Gene3D" id="2.30.30.180">
    <property type="entry name" value="Ribosome maturation factor RimP, C-terminal domain"/>
    <property type="match status" value="1"/>
</dbReference>
<dbReference type="Gene3D" id="3.30.300.70">
    <property type="entry name" value="RimP-like superfamily, N-terminal"/>
    <property type="match status" value="1"/>
</dbReference>
<dbReference type="HAMAP" id="MF_01077">
    <property type="entry name" value="RimP"/>
    <property type="match status" value="1"/>
</dbReference>
<dbReference type="InterPro" id="IPR003728">
    <property type="entry name" value="Ribosome_maturation_RimP"/>
</dbReference>
<dbReference type="InterPro" id="IPR028998">
    <property type="entry name" value="RimP_C"/>
</dbReference>
<dbReference type="InterPro" id="IPR036847">
    <property type="entry name" value="RimP_C_sf"/>
</dbReference>
<dbReference type="InterPro" id="IPR028989">
    <property type="entry name" value="RimP_N"/>
</dbReference>
<dbReference type="InterPro" id="IPR035956">
    <property type="entry name" value="RimP_N_sf"/>
</dbReference>
<dbReference type="NCBIfam" id="NF000932">
    <property type="entry name" value="PRK00092.2-5"/>
    <property type="match status" value="1"/>
</dbReference>
<dbReference type="PANTHER" id="PTHR33867">
    <property type="entry name" value="RIBOSOME MATURATION FACTOR RIMP"/>
    <property type="match status" value="1"/>
</dbReference>
<dbReference type="PANTHER" id="PTHR33867:SF1">
    <property type="entry name" value="RIBOSOME MATURATION FACTOR RIMP"/>
    <property type="match status" value="1"/>
</dbReference>
<dbReference type="Pfam" id="PF17384">
    <property type="entry name" value="DUF150_C"/>
    <property type="match status" value="1"/>
</dbReference>
<dbReference type="Pfam" id="PF02576">
    <property type="entry name" value="RimP_N"/>
    <property type="match status" value="1"/>
</dbReference>
<dbReference type="SUPFAM" id="SSF74942">
    <property type="entry name" value="YhbC-like, C-terminal domain"/>
    <property type="match status" value="1"/>
</dbReference>
<dbReference type="SUPFAM" id="SSF75420">
    <property type="entry name" value="YhbC-like, N-terminal domain"/>
    <property type="match status" value="1"/>
</dbReference>
<organism>
    <name type="scientific">Dinoroseobacter shibae (strain DSM 16493 / NCIMB 14021 / DFL 12)</name>
    <dbReference type="NCBI Taxonomy" id="398580"/>
    <lineage>
        <taxon>Bacteria</taxon>
        <taxon>Pseudomonadati</taxon>
        <taxon>Pseudomonadota</taxon>
        <taxon>Alphaproteobacteria</taxon>
        <taxon>Rhodobacterales</taxon>
        <taxon>Roseobacteraceae</taxon>
        <taxon>Dinoroseobacter</taxon>
    </lineage>
</organism>
<accession>A8LQ53</accession>
<proteinExistence type="inferred from homology"/>
<comment type="function">
    <text evidence="1">Required for maturation of 30S ribosomal subunits.</text>
</comment>
<comment type="subcellular location">
    <subcellularLocation>
        <location evidence="1">Cytoplasm</location>
    </subcellularLocation>
</comment>
<comment type="similarity">
    <text evidence="1">Belongs to the RimP family.</text>
</comment>
<evidence type="ECO:0000255" key="1">
    <source>
        <dbReference type="HAMAP-Rule" id="MF_01077"/>
    </source>
</evidence>
<keyword id="KW-0963">Cytoplasm</keyword>
<keyword id="KW-1185">Reference proteome</keyword>
<keyword id="KW-0690">Ribosome biogenesis</keyword>
<feature type="chain" id="PRO_1000084524" description="Ribosome maturation factor RimP">
    <location>
        <begin position="1"/>
        <end position="196"/>
    </location>
</feature>
<protein>
    <recommendedName>
        <fullName evidence="1">Ribosome maturation factor RimP</fullName>
    </recommendedName>
</protein>